<keyword id="KW-0472">Membrane</keyword>
<keyword id="KW-1185">Reference proteome</keyword>
<keyword id="KW-0812">Transmembrane</keyword>
<keyword id="KW-1133">Transmembrane helix</keyword>
<proteinExistence type="predicted"/>
<sequence>MESHHKWGIAFIAAGLALEILFPVLLVFDTILIVVGIALILFGGREKKIEGVS</sequence>
<feature type="chain" id="PRO_0000127938" description="Uncharacterized protein AF_0870">
    <location>
        <begin position="1"/>
        <end position="53"/>
    </location>
</feature>
<feature type="transmembrane region" description="Helical" evidence="1">
    <location>
        <begin position="20"/>
        <end position="42"/>
    </location>
</feature>
<gene>
    <name type="ordered locus">AF_0870</name>
</gene>
<evidence type="ECO:0000255" key="1"/>
<evidence type="ECO:0000305" key="2"/>
<dbReference type="EMBL" id="AE000782">
    <property type="protein sequence ID" value="AAB90378.1"/>
    <property type="molecule type" value="Genomic_DNA"/>
</dbReference>
<dbReference type="PIR" id="F69358">
    <property type="entry name" value="F69358"/>
</dbReference>
<dbReference type="SMR" id="O29391"/>
<dbReference type="STRING" id="224325.AF_0870"/>
<dbReference type="PaxDb" id="224325-AF_0870"/>
<dbReference type="EnsemblBacteria" id="AAB90378">
    <property type="protein sequence ID" value="AAB90378"/>
    <property type="gene ID" value="AF_0870"/>
</dbReference>
<dbReference type="KEGG" id="afu:AF_0870"/>
<dbReference type="eggNOG" id="arCOG06118">
    <property type="taxonomic scope" value="Archaea"/>
</dbReference>
<dbReference type="HOGENOM" id="CLU_212435_0_0_2"/>
<dbReference type="Proteomes" id="UP000002199">
    <property type="component" value="Chromosome"/>
</dbReference>
<dbReference type="GO" id="GO:0016020">
    <property type="term" value="C:membrane"/>
    <property type="evidence" value="ECO:0007669"/>
    <property type="project" value="UniProtKB-SubCell"/>
</dbReference>
<reference key="1">
    <citation type="journal article" date="1997" name="Nature">
        <title>The complete genome sequence of the hyperthermophilic, sulphate-reducing archaeon Archaeoglobus fulgidus.</title>
        <authorList>
            <person name="Klenk H.-P."/>
            <person name="Clayton R.A."/>
            <person name="Tomb J.-F."/>
            <person name="White O."/>
            <person name="Nelson K.E."/>
            <person name="Ketchum K.A."/>
            <person name="Dodson R.J."/>
            <person name="Gwinn M.L."/>
            <person name="Hickey E.K."/>
            <person name="Peterson J.D."/>
            <person name="Richardson D.L."/>
            <person name="Kerlavage A.R."/>
            <person name="Graham D.E."/>
            <person name="Kyrpides N.C."/>
            <person name="Fleischmann R.D."/>
            <person name="Quackenbush J."/>
            <person name="Lee N.H."/>
            <person name="Sutton G.G."/>
            <person name="Gill S.R."/>
            <person name="Kirkness E.F."/>
            <person name="Dougherty B.A."/>
            <person name="McKenney K."/>
            <person name="Adams M.D."/>
            <person name="Loftus B.J."/>
            <person name="Peterson S.N."/>
            <person name="Reich C.I."/>
            <person name="McNeil L.K."/>
            <person name="Badger J.H."/>
            <person name="Glodek A."/>
            <person name="Zhou L."/>
            <person name="Overbeek R."/>
            <person name="Gocayne J.D."/>
            <person name="Weidman J.F."/>
            <person name="McDonald L.A."/>
            <person name="Utterback T.R."/>
            <person name="Cotton M.D."/>
            <person name="Spriggs T."/>
            <person name="Artiach P."/>
            <person name="Kaine B.P."/>
            <person name="Sykes S.M."/>
            <person name="Sadow P.W."/>
            <person name="D'Andrea K.P."/>
            <person name="Bowman C."/>
            <person name="Fujii C."/>
            <person name="Garland S.A."/>
            <person name="Mason T.M."/>
            <person name="Olsen G.J."/>
            <person name="Fraser C.M."/>
            <person name="Smith H.O."/>
            <person name="Woese C.R."/>
            <person name="Venter J.C."/>
        </authorList>
    </citation>
    <scope>NUCLEOTIDE SEQUENCE [LARGE SCALE GENOMIC DNA]</scope>
    <source>
        <strain>ATCC 49558 / DSM 4304 / JCM 9628 / NBRC 100126 / VC-16</strain>
    </source>
</reference>
<comment type="subcellular location">
    <subcellularLocation>
        <location evidence="2">Membrane</location>
        <topology evidence="2">Single-pass membrane protein</topology>
    </subcellularLocation>
</comment>
<accession>O29391</accession>
<organism>
    <name type="scientific">Archaeoglobus fulgidus (strain ATCC 49558 / DSM 4304 / JCM 9628 / NBRC 100126 / VC-16)</name>
    <dbReference type="NCBI Taxonomy" id="224325"/>
    <lineage>
        <taxon>Archaea</taxon>
        <taxon>Methanobacteriati</taxon>
        <taxon>Methanobacteriota</taxon>
        <taxon>Archaeoglobi</taxon>
        <taxon>Archaeoglobales</taxon>
        <taxon>Archaeoglobaceae</taxon>
        <taxon>Archaeoglobus</taxon>
    </lineage>
</organism>
<name>Y870_ARCFU</name>
<protein>
    <recommendedName>
        <fullName>Uncharacterized protein AF_0870</fullName>
    </recommendedName>
</protein>